<protein>
    <recommendedName>
        <fullName>Endoribonuclease Dicer-L</fullName>
        <ecNumber>3.1.26.3</ecNumber>
    </recommendedName>
</protein>
<gene>
    <name type="primary">dicer1.L</name>
    <name type="synonym">dicer1</name>
</gene>
<proteinExistence type="evidence at transcript level"/>
<keyword id="KW-0067">ATP-binding</keyword>
<keyword id="KW-0963">Cytoplasm</keyword>
<keyword id="KW-0255">Endonuclease</keyword>
<keyword id="KW-0347">Helicase</keyword>
<keyword id="KW-0378">Hydrolase</keyword>
<keyword id="KW-0460">Magnesium</keyword>
<keyword id="KW-0464">Manganese</keyword>
<keyword id="KW-0479">Metal-binding</keyword>
<keyword id="KW-0540">Nuclease</keyword>
<keyword id="KW-0547">Nucleotide-binding</keyword>
<keyword id="KW-0597">Phosphoprotein</keyword>
<keyword id="KW-1185">Reference proteome</keyword>
<keyword id="KW-0677">Repeat</keyword>
<keyword id="KW-0694">RNA-binding</keyword>
<keyword id="KW-0943">RNA-mediated gene silencing</keyword>
<evidence type="ECO:0000250" key="1"/>
<evidence type="ECO:0000250" key="2">
    <source>
        <dbReference type="UniProtKB" id="B3DLA6"/>
    </source>
</evidence>
<evidence type="ECO:0000250" key="3">
    <source>
        <dbReference type="UniProtKB" id="Q8R418"/>
    </source>
</evidence>
<evidence type="ECO:0000250" key="4">
    <source>
        <dbReference type="UniProtKB" id="Q9UPY3"/>
    </source>
</evidence>
<evidence type="ECO:0000255" key="5">
    <source>
        <dbReference type="PROSITE-ProRule" id="PRU00142"/>
    </source>
</evidence>
<evidence type="ECO:0000255" key="6">
    <source>
        <dbReference type="PROSITE-ProRule" id="PRU00177"/>
    </source>
</evidence>
<evidence type="ECO:0000255" key="7">
    <source>
        <dbReference type="PROSITE-ProRule" id="PRU00266"/>
    </source>
</evidence>
<evidence type="ECO:0000255" key="8">
    <source>
        <dbReference type="PROSITE-ProRule" id="PRU00541"/>
    </source>
</evidence>
<evidence type="ECO:0000255" key="9">
    <source>
        <dbReference type="PROSITE-ProRule" id="PRU00542"/>
    </source>
</evidence>
<evidence type="ECO:0000255" key="10">
    <source>
        <dbReference type="PROSITE-ProRule" id="PRU00657"/>
    </source>
</evidence>
<evidence type="ECO:0000269" key="11">
    <source>
    </source>
</evidence>
<sequence>MAGLQLMTPASSPMGPFFGLPWQQEAIHDNIYTPRKYQVELLEAALDHNTIVCLNSGSGKTFIAVLLSKELSYQIRGDFSKNAKRTVFLVNSEKQVSQQVSAVRTHTDLKVGEYSDLQKTQCWAKEKWYQEFETRQVLVMTCHIFLNVLKSGNVSLSNINLLVFDECHLAIQDHPYREIMKICESCQPCPRILGLTASILNGKCDPRDLEEKIQKLEKILRSNAETATDLVVLDRYASQPCEIVLDCGPYVDRSGLFQRLLNELDEALNFLIDCNISTHSKERDSTIISKQILSDCRAVLLVLGPWCADKVAGMMVRELQKYIKHEQEELHRKFLLFTDTILRKIHALCEEHFSPASLDMKFVTPKVIKLLEILRKYKPYERQQFESVEWYNNRNQDNYVSWSDSEDDDDDEDEEIEEKEKTETSFPSPFTNILCGIIFVERRYTAVVLNRLIKEAGKQDPELAYISSNFITGHGIGKNQPRNKQMEVEFRKQEEVLRKFRAHETNLLIATSIVEEGVDIPKCNLVVRFDLPSEYRSYVQSKGRARAPISNYIMLADSDKIKTFEEDLKTYKAIEKILRNKCSKSIDCGNTESEPVVDDDEIFPPYVLRQDDGSPRVTINTAIGHINRYCARLPSDPFTHLAPKCKTREMSDGPYRSTLYLPINSPLRAPIVGPPMNCARLAERAVALICCKKLHEIGELDDHLMPVGKETVKYEEELDLHDEEETSVPGRPGSTKRRQCYPKAIPECLRNSYPKPGQPCYLYVIGMVLTTPLPDELNFRRRKLYPPEDTTRCFGILTAKPIPQIPHFPVYTRSGEVTISIELKKSGFTLNLEQLELITRLHQYIFSHILRLEKPALEFKPTVADCAYCVLPLNVVNDSGTLDIDFKFVEDIEKSEARTGIPNTQYSAESPFIFKLEDYQDAVIIPRYRNFDQPHRFYVADVYTDLTPLSKFPSPEYETFAEYYKTKYNLDLTNLNQPLLDVDHTSSRLNLLTPRHLNQKGKALPLSSAEKRKAKWESLQNKQILVPELCAIHPVPASLWRKAVCLPSILYRLHCLLTAEELRAQTAIDAGVGVKSLPEDFRYPNLDFGWKRSIDSKTFISSQSSSAVESEGDCRLNTTMVPDSATSSAANHVIYTQTNDQMSVNCTPLCQKSLSDLRGVCFSEDYKAINGVSCNGVTSDSEAESGVCFQKDERIACTQEIPEKSTSFHIQNLPKENQPILNECTLSKKFLDGNVSKPTSDECPSTCTSDMQYESGLSNGYSSKTLGPNPGLILQALTLSNASDGFNLERLEMLGDSFLKHAITTYLFCTYPDAHEGRLSYMRSKKVSNCNLYRLGKKKGSPSRMVVSIFDPPVNWLPPGYIVNQDKSSDKWESNETSGEGVMANGKIDEDFDDDDEEDEDLMWRNPKEETDFDDDFLEYDQEHIKFIDSMLMGSGAFVKKIPLSSFAPPDQNYEWRAPKKPLLESAQFPSEFDDFDYSSWDAMCYLDPSKAVEEDDFVVGFWNPSEENCGTDVGKQSISYDLHTEQCIADKSIADCVEALLGCYLTSCGERAAQLFLCSLGLKVLPQVRRSVTSTNSISASSSYQKTSTRDICTLNSELSSCKGVEYGYLKIPPRCMFEHPDAEKTLDHLISGFENFEKKINYPFKNKAYLLQAFTHASYHYNTITDCYQRLEFLGDAILDYLITKHLYEDPRQHSPGVLTDLRSALVNNTIFASLAVKYDYHKYFKAISPELFHVIDDFVQFQLEKNEMQGMDSELRRSEEDEEKEEDIEVPKAMGDIFESLAGAIYMDSGMSLETVWRVYYPMMHPLIEKFSANVPRSPVRELLEMEPETAKFSPAERTYDGKVRVTVEVVGKGKFKGVGRSYRIAKSAAARRALRSLKANQSQVPNS</sequence>
<organism>
    <name type="scientific">Xenopus laevis</name>
    <name type="common">African clawed frog</name>
    <dbReference type="NCBI Taxonomy" id="8355"/>
    <lineage>
        <taxon>Eukaryota</taxon>
        <taxon>Metazoa</taxon>
        <taxon>Chordata</taxon>
        <taxon>Craniata</taxon>
        <taxon>Vertebrata</taxon>
        <taxon>Euteleostomi</taxon>
        <taxon>Amphibia</taxon>
        <taxon>Batrachia</taxon>
        <taxon>Anura</taxon>
        <taxon>Pipoidea</taxon>
        <taxon>Pipidae</taxon>
        <taxon>Xenopodinae</taxon>
        <taxon>Xenopus</taxon>
        <taxon>Xenopus</taxon>
    </lineage>
</organism>
<reference key="1">
    <citation type="journal article" date="2016" name="Nature">
        <title>Genome evolution in the allotetraploid frog Xenopus laevis.</title>
        <authorList>
            <person name="Session A.M."/>
            <person name="Uno Y."/>
            <person name="Kwon T."/>
            <person name="Chapman J.A."/>
            <person name="Toyoda A."/>
            <person name="Takahashi S."/>
            <person name="Fukui A."/>
            <person name="Hikosaka A."/>
            <person name="Suzuki A."/>
            <person name="Kondo M."/>
            <person name="van Heeringen S.J."/>
            <person name="Quigley I."/>
            <person name="Heinz S."/>
            <person name="Ogino H."/>
            <person name="Ochi H."/>
            <person name="Hellsten U."/>
            <person name="Lyons J.B."/>
            <person name="Simakov O."/>
            <person name="Putnam N."/>
            <person name="Stites J."/>
            <person name="Kuroki Y."/>
            <person name="Tanaka T."/>
            <person name="Michiue T."/>
            <person name="Watanabe M."/>
            <person name="Bogdanovic O."/>
            <person name="Lister R."/>
            <person name="Georgiou G."/>
            <person name="Paranjpe S.S."/>
            <person name="van Kruijsbergen I."/>
            <person name="Shu S."/>
            <person name="Carlson J."/>
            <person name="Kinoshita T."/>
            <person name="Ohta Y."/>
            <person name="Mawaribuchi S."/>
            <person name="Jenkins J."/>
            <person name="Grimwood J."/>
            <person name="Schmutz J."/>
            <person name="Mitros T."/>
            <person name="Mozaffari S.V."/>
            <person name="Suzuki Y."/>
            <person name="Haramoto Y."/>
            <person name="Yamamoto T.S."/>
            <person name="Takagi C."/>
            <person name="Heald R."/>
            <person name="Miller K."/>
            <person name="Haudenschild C."/>
            <person name="Kitzman J."/>
            <person name="Nakayama T."/>
            <person name="Izutsu Y."/>
            <person name="Robert J."/>
            <person name="Fortriede J."/>
            <person name="Burns K."/>
            <person name="Lotay V."/>
            <person name="Karimi K."/>
            <person name="Yasuoka Y."/>
            <person name="Dichmann D.S."/>
            <person name="Flajnik M.F."/>
            <person name="Houston D.W."/>
            <person name="Shendure J."/>
            <person name="DuPasquier L."/>
            <person name="Vize P.D."/>
            <person name="Zorn A.M."/>
            <person name="Ito M."/>
            <person name="Marcotte E.M."/>
            <person name="Wallingford J.B."/>
            <person name="Ito Y."/>
            <person name="Asashima M."/>
            <person name="Ueno N."/>
            <person name="Matsuda Y."/>
            <person name="Veenstra G.J."/>
            <person name="Fujiyama A."/>
            <person name="Harland R.M."/>
            <person name="Taira M."/>
            <person name="Rokhsar D.S."/>
        </authorList>
    </citation>
    <scope>NUCLEOTIDE SEQUENCE [LARGE SCALE GENOMIC DNA]</scope>
    <source>
        <strain>J</strain>
    </source>
</reference>
<reference key="2">
    <citation type="journal article" date="2021" name="Nat. Commun.">
        <title>Bicc1 and Dicer regulate left-right patterning through post-transcriptional control of the Nodal inhibitor Dand5.</title>
        <authorList>
            <person name="Maerker M."/>
            <person name="Getwan M."/>
            <person name="Dowdle M.E."/>
            <person name="McSheene J.C."/>
            <person name="Gonzalez V."/>
            <person name="Pelliccia J.L."/>
            <person name="Hamilton D.S."/>
            <person name="Yartseva V."/>
            <person name="Vejnar C."/>
            <person name="Tingler M."/>
            <person name="Minegishi K."/>
            <person name="Vick P."/>
            <person name="Giraldez A.J."/>
            <person name="Hamada H."/>
            <person name="Burdine R.D."/>
            <person name="Sheets M.D."/>
            <person name="Blum M."/>
            <person name="Schweickert A."/>
        </authorList>
    </citation>
    <scope>FUNCTION</scope>
    <scope>DEVELOPMENTAL STAGE</scope>
</reference>
<feature type="chain" id="PRO_0000462470" description="Endoribonuclease Dicer-L" evidence="2">
    <location>
        <begin position="1"/>
        <end position="1891"/>
    </location>
</feature>
<feature type="domain" description="Helicase ATP-binding" evidence="8">
    <location>
        <begin position="41"/>
        <end position="217"/>
    </location>
</feature>
<feature type="domain" description="Helicase C-terminal" evidence="9">
    <location>
        <begin position="425"/>
        <end position="594"/>
    </location>
</feature>
<feature type="domain" description="Dicer dsRNA-binding fold" evidence="10">
    <location>
        <begin position="622"/>
        <end position="714"/>
    </location>
</feature>
<feature type="domain" description="PAZ" evidence="5">
    <location>
        <begin position="887"/>
        <end position="1034"/>
    </location>
</feature>
<feature type="domain" description="RNase III 1" evidence="6">
    <location>
        <begin position="1248"/>
        <end position="1379"/>
    </location>
</feature>
<feature type="domain" description="RNase III 2" evidence="6">
    <location>
        <begin position="1635"/>
        <end position="1793"/>
    </location>
</feature>
<feature type="domain" description="DRBM" evidence="7">
    <location>
        <begin position="1818"/>
        <end position="1883"/>
    </location>
</feature>
<feature type="short sequence motif" description="DECH box">
    <location>
        <begin position="165"/>
        <end position="168"/>
    </location>
</feature>
<feature type="binding site" evidence="8">
    <location>
        <begin position="54"/>
        <end position="61"/>
    </location>
    <ligand>
        <name>ATP</name>
        <dbReference type="ChEBI" id="CHEBI:30616"/>
    </ligand>
</feature>
<feature type="binding site" evidence="1">
    <location>
        <position position="1292"/>
    </location>
    <ligand>
        <name>Mg(2+)</name>
        <dbReference type="ChEBI" id="CHEBI:18420"/>
        <label>1</label>
    </ligand>
</feature>
<feature type="binding site" evidence="1">
    <location>
        <position position="1370"/>
    </location>
    <ligand>
        <name>Mg(2+)</name>
        <dbReference type="ChEBI" id="CHEBI:18420"/>
        <label>1</label>
    </ligand>
</feature>
<feature type="binding site" evidence="1">
    <location>
        <position position="1373"/>
    </location>
    <ligand>
        <name>Mg(2+)</name>
        <dbReference type="ChEBI" id="CHEBI:18420"/>
        <label>1</label>
    </ligand>
</feature>
<feature type="binding site" evidence="4">
    <location>
        <position position="1674"/>
    </location>
    <ligand>
        <name>Mg(2+)</name>
        <dbReference type="ChEBI" id="CHEBI:18420"/>
        <label>2</label>
    </ligand>
</feature>
<feature type="binding site" evidence="4">
    <location>
        <position position="1779"/>
    </location>
    <ligand>
        <name>Mg(2+)</name>
        <dbReference type="ChEBI" id="CHEBI:18420"/>
        <label>2</label>
    </ligand>
</feature>
<feature type="binding site" evidence="4">
    <location>
        <position position="1782"/>
    </location>
    <ligand>
        <name>Mg(2+)</name>
        <dbReference type="ChEBI" id="CHEBI:18420"/>
        <label>2</label>
    </ligand>
</feature>
<feature type="site" description="Important for activity" evidence="3">
    <location>
        <position position="1775"/>
    </location>
</feature>
<comment type="function">
    <text evidence="4 11">Double-stranded RNA (dsRNA) endoribonuclease playing a central role in short dsRNA-mediated post-transcriptional gene silencing. Cleaves naturally occurring long dsRNAs and short hairpin pre-microRNAs (miRNA) into fragments of 21 to 23 nucleotides with 3' overhang of two nucleotides, producing respectively short interfering RNAs (siRNA) and mature microRNAs. SiRNAs and miRNAs serve as guide to direct the RNA-induced silencing complex (RISC) to complementary RNAs to degrade them or prevent their translation. Gene silencing mediated by siRNAs, also called RNA interference, controls the elimination of transcripts from mobile and repetitive DNA elements of the genome but also the degradation of exogenous RNA of viral origin for instance. The miRNA pathway on the other side is a mean to specifically regulate the expression of target genes (By similarity). During embryonic development, at the left-right organizer, post-transcriptionally regulates the expression of dand5 in flow sensor cells. In post-flow stages, acts along with Bicc1 to repress dand5 mRNA translation and decay. Decreased Dand5 expression lifts repression of Nodal and defines leftness by induction of the lateral plate mesoderm Nodal signaling cascade (PubMed:34531379).</text>
</comment>
<comment type="catalytic activity">
    <reaction evidence="2">
        <text>Endonucleolytic cleavage to 5'-phosphomonoester.</text>
        <dbReference type="EC" id="3.1.26.3"/>
    </reaction>
</comment>
<comment type="cofactor">
    <cofactor evidence="4">
        <name>Mg(2+)</name>
        <dbReference type="ChEBI" id="CHEBI:18420"/>
    </cofactor>
    <cofactor evidence="4">
        <name>Mn(2+)</name>
        <dbReference type="ChEBI" id="CHEBI:29035"/>
    </cofactor>
    <text evidence="4">Binds 2 magnesium or manganese ions per subunit.</text>
</comment>
<comment type="subunit">
    <text evidence="4">Component of the RISC loading complex (RLC), or micro-RNA (miRNA) loading complex (miRLC), which is composed of dicer1, ago2 and tarbp2; dicer1 and tarbp2 are required to process precursor miRNAs (pre-miRNAs) to mature miRNAs and then load them onto ago2. Note that the trimeric RLC/miRLC is also referred to as RISC.</text>
</comment>
<comment type="subcellular location">
    <subcellularLocation>
        <location evidence="4">Cytoplasm</location>
    </subcellularLocation>
</comment>
<comment type="developmental stage">
    <text evidence="11">Expressed in somites and notochord at flow-stage (st. 18). Specifically found in somitic left-right organizer (LRO) cells, excluding the notochordal LRO cells in-between and the lateral endodermal cells flanking the LRO.</text>
</comment>
<comment type="similarity">
    <text evidence="10">Belongs to the helicase family. Dicer subfamily.</text>
</comment>
<name>DICRL_XENLA</name>
<accession>A0A974H8H3</accession>
<accession>A0A1L8F9L1</accession>
<dbReference type="EC" id="3.1.26.3"/>
<dbReference type="EMBL" id="CM004480">
    <property type="protein sequence ID" value="OCT68281.1"/>
    <property type="molecule type" value="Genomic_DNA"/>
</dbReference>
<dbReference type="RefSeq" id="XP_018085949.1">
    <property type="nucleotide sequence ID" value="XM_018230460.2"/>
</dbReference>
<dbReference type="RefSeq" id="XP_018085950.1">
    <property type="nucleotide sequence ID" value="XM_018230461.2"/>
</dbReference>
<dbReference type="RefSeq" id="XP_018085951.1">
    <property type="nucleotide sequence ID" value="XM_018230462.1"/>
</dbReference>
<dbReference type="PaxDb" id="8355-A0A1L8F9L1"/>
<dbReference type="GeneID" id="108698734"/>
<dbReference type="KEGG" id="xla:108698734"/>
<dbReference type="AGR" id="Xenbase:XB-GENE-17331064"/>
<dbReference type="CTD" id="108698734"/>
<dbReference type="Xenbase" id="XB-GENE-17331064">
    <property type="gene designation" value="dicer1.L"/>
</dbReference>
<dbReference type="OMA" id="CGFHKYF"/>
<dbReference type="OrthoDB" id="2392202at2759"/>
<dbReference type="Proteomes" id="UP000186698">
    <property type="component" value="Chromosome 8L"/>
</dbReference>
<dbReference type="Bgee" id="108698734">
    <property type="expression patterns" value="Expressed in blastula and 15 other cell types or tissues"/>
</dbReference>
<dbReference type="GO" id="GO:0005737">
    <property type="term" value="C:cytoplasm"/>
    <property type="evidence" value="ECO:0007669"/>
    <property type="project" value="TreeGrafter"/>
</dbReference>
<dbReference type="GO" id="GO:0005634">
    <property type="term" value="C:nucleus"/>
    <property type="evidence" value="ECO:0007669"/>
    <property type="project" value="TreeGrafter"/>
</dbReference>
<dbReference type="GO" id="GO:0070578">
    <property type="term" value="C:RISC-loading complex"/>
    <property type="evidence" value="ECO:0007669"/>
    <property type="project" value="TreeGrafter"/>
</dbReference>
<dbReference type="GO" id="GO:0005524">
    <property type="term" value="F:ATP binding"/>
    <property type="evidence" value="ECO:0007669"/>
    <property type="project" value="UniProtKB-KW"/>
</dbReference>
<dbReference type="GO" id="GO:0004530">
    <property type="term" value="F:deoxyribonuclease I activity"/>
    <property type="evidence" value="ECO:0007669"/>
    <property type="project" value="TreeGrafter"/>
</dbReference>
<dbReference type="GO" id="GO:0004386">
    <property type="term" value="F:helicase activity"/>
    <property type="evidence" value="ECO:0007669"/>
    <property type="project" value="UniProtKB-KW"/>
</dbReference>
<dbReference type="GO" id="GO:0004525">
    <property type="term" value="F:ribonuclease III activity"/>
    <property type="evidence" value="ECO:0007669"/>
    <property type="project" value="InterPro"/>
</dbReference>
<dbReference type="GO" id="GO:0003723">
    <property type="term" value="F:RNA binding"/>
    <property type="evidence" value="ECO:0007669"/>
    <property type="project" value="UniProtKB-UniRule"/>
</dbReference>
<dbReference type="GO" id="GO:0006309">
    <property type="term" value="P:apoptotic DNA fragmentation"/>
    <property type="evidence" value="ECO:0007669"/>
    <property type="project" value="TreeGrafter"/>
</dbReference>
<dbReference type="GO" id="GO:0031054">
    <property type="term" value="P:pre-miRNA processing"/>
    <property type="evidence" value="ECO:0007669"/>
    <property type="project" value="InterPro"/>
</dbReference>
<dbReference type="GO" id="GO:0030422">
    <property type="term" value="P:siRNA processing"/>
    <property type="evidence" value="ECO:0007669"/>
    <property type="project" value="InterPro"/>
</dbReference>
<dbReference type="CDD" id="cd18034">
    <property type="entry name" value="DEXHc_dicer"/>
    <property type="match status" value="1"/>
</dbReference>
<dbReference type="CDD" id="cd15903">
    <property type="entry name" value="Dicer_PBD"/>
    <property type="match status" value="1"/>
</dbReference>
<dbReference type="CDD" id="cd10843">
    <property type="entry name" value="DSRM_DICER"/>
    <property type="match status" value="1"/>
</dbReference>
<dbReference type="CDD" id="cd02843">
    <property type="entry name" value="PAZ_dicer_like"/>
    <property type="match status" value="1"/>
</dbReference>
<dbReference type="CDD" id="cd00593">
    <property type="entry name" value="RIBOc"/>
    <property type="match status" value="2"/>
</dbReference>
<dbReference type="CDD" id="cd18802">
    <property type="entry name" value="SF2_C_dicer"/>
    <property type="match status" value="1"/>
</dbReference>
<dbReference type="FunFam" id="1.10.1520.10:FF:000023">
    <property type="entry name" value="Endoribonuclease dcr-1"/>
    <property type="match status" value="1"/>
</dbReference>
<dbReference type="FunFam" id="3.40.50.300:FF:000628">
    <property type="entry name" value="Endoribonuclease Dicer"/>
    <property type="match status" value="1"/>
</dbReference>
<dbReference type="FunFam" id="3.30.160.20:FF:000015">
    <property type="entry name" value="endoribonuclease Dicer"/>
    <property type="match status" value="1"/>
</dbReference>
<dbReference type="FunFam" id="3.30.160.380:FF:000002">
    <property type="entry name" value="Endoribonuclease Dicer isoform 1"/>
    <property type="match status" value="1"/>
</dbReference>
<dbReference type="FunFam" id="3.40.50.300:FF:000588">
    <property type="entry name" value="Endoribonuclease Dicer isoform 1"/>
    <property type="match status" value="1"/>
</dbReference>
<dbReference type="FunFam" id="2.170.260.10:FF:000002">
    <property type="entry name" value="Putative Endoribonuclease Dicer"/>
    <property type="match status" value="1"/>
</dbReference>
<dbReference type="FunFam" id="1.10.1520.10:FF:000005">
    <property type="entry name" value="Putative endoribonuclease dicer"/>
    <property type="match status" value="1"/>
</dbReference>
<dbReference type="Gene3D" id="3.30.160.20">
    <property type="match status" value="1"/>
</dbReference>
<dbReference type="Gene3D" id="3.30.160.380">
    <property type="entry name" value="Dicer dimerisation domain"/>
    <property type="match status" value="1"/>
</dbReference>
<dbReference type="Gene3D" id="3.40.50.300">
    <property type="entry name" value="P-loop containing nucleotide triphosphate hydrolases"/>
    <property type="match status" value="2"/>
</dbReference>
<dbReference type="Gene3D" id="2.170.260.10">
    <property type="entry name" value="paz domain"/>
    <property type="match status" value="1"/>
</dbReference>
<dbReference type="Gene3D" id="1.10.1520.10">
    <property type="entry name" value="Ribonuclease III domain"/>
    <property type="match status" value="2"/>
</dbReference>
<dbReference type="InterPro" id="IPR011545">
    <property type="entry name" value="DEAD/DEAH_box_helicase_dom"/>
</dbReference>
<dbReference type="InterPro" id="IPR038248">
    <property type="entry name" value="Dicer_dimer_sf"/>
</dbReference>
<dbReference type="InterPro" id="IPR005034">
    <property type="entry name" value="Dicer_dimerisation_dom"/>
</dbReference>
<dbReference type="InterPro" id="IPR044441">
    <property type="entry name" value="DICER_DSRM"/>
</dbReference>
<dbReference type="InterPro" id="IPR048513">
    <property type="entry name" value="Dicer_PBD"/>
</dbReference>
<dbReference type="InterPro" id="IPR048512">
    <property type="entry name" value="Dicer_platform"/>
</dbReference>
<dbReference type="InterPro" id="IPR014720">
    <property type="entry name" value="dsRBD_dom"/>
</dbReference>
<dbReference type="InterPro" id="IPR014001">
    <property type="entry name" value="Helicase_ATP-bd"/>
</dbReference>
<dbReference type="InterPro" id="IPR001650">
    <property type="entry name" value="Helicase_C-like"/>
</dbReference>
<dbReference type="InterPro" id="IPR027417">
    <property type="entry name" value="P-loop_NTPase"/>
</dbReference>
<dbReference type="InterPro" id="IPR003100">
    <property type="entry name" value="PAZ_dom"/>
</dbReference>
<dbReference type="InterPro" id="IPR036085">
    <property type="entry name" value="PAZ_dom_sf"/>
</dbReference>
<dbReference type="InterPro" id="IPR000999">
    <property type="entry name" value="RNase_III_dom"/>
</dbReference>
<dbReference type="InterPro" id="IPR036389">
    <property type="entry name" value="RNase_III_sf"/>
</dbReference>
<dbReference type="PANTHER" id="PTHR14950">
    <property type="entry name" value="DICER-RELATED"/>
    <property type="match status" value="1"/>
</dbReference>
<dbReference type="PANTHER" id="PTHR14950:SF37">
    <property type="entry name" value="ENDORIBONUCLEASE DICER"/>
    <property type="match status" value="1"/>
</dbReference>
<dbReference type="Pfam" id="PF00270">
    <property type="entry name" value="DEAD"/>
    <property type="match status" value="1"/>
</dbReference>
<dbReference type="Pfam" id="PF03368">
    <property type="entry name" value="Dicer_dimer"/>
    <property type="match status" value="1"/>
</dbReference>
<dbReference type="Pfam" id="PF20932">
    <property type="entry name" value="Dicer_dsRBD"/>
    <property type="match status" value="1"/>
</dbReference>
<dbReference type="Pfam" id="PF20930">
    <property type="entry name" value="Dicer_PBD"/>
    <property type="match status" value="1"/>
</dbReference>
<dbReference type="Pfam" id="PF20931">
    <property type="entry name" value="Dicer_platform"/>
    <property type="match status" value="1"/>
</dbReference>
<dbReference type="Pfam" id="PF00271">
    <property type="entry name" value="Helicase_C"/>
    <property type="match status" value="1"/>
</dbReference>
<dbReference type="Pfam" id="PF02170">
    <property type="entry name" value="PAZ"/>
    <property type="match status" value="1"/>
</dbReference>
<dbReference type="Pfam" id="PF00636">
    <property type="entry name" value="Ribonuclease_3"/>
    <property type="match status" value="2"/>
</dbReference>
<dbReference type="SMART" id="SM00487">
    <property type="entry name" value="DEXDc"/>
    <property type="match status" value="1"/>
</dbReference>
<dbReference type="SMART" id="SM00358">
    <property type="entry name" value="DSRM"/>
    <property type="match status" value="1"/>
</dbReference>
<dbReference type="SMART" id="SM00490">
    <property type="entry name" value="HELICc"/>
    <property type="match status" value="1"/>
</dbReference>
<dbReference type="SMART" id="SM00949">
    <property type="entry name" value="PAZ"/>
    <property type="match status" value="1"/>
</dbReference>
<dbReference type="SMART" id="SM00535">
    <property type="entry name" value="RIBOc"/>
    <property type="match status" value="2"/>
</dbReference>
<dbReference type="SUPFAM" id="SSF54768">
    <property type="entry name" value="dsRNA-binding domain-like"/>
    <property type="match status" value="1"/>
</dbReference>
<dbReference type="SUPFAM" id="SSF52540">
    <property type="entry name" value="P-loop containing nucleoside triphosphate hydrolases"/>
    <property type="match status" value="1"/>
</dbReference>
<dbReference type="SUPFAM" id="SSF101690">
    <property type="entry name" value="PAZ domain"/>
    <property type="match status" value="1"/>
</dbReference>
<dbReference type="SUPFAM" id="SSF69065">
    <property type="entry name" value="RNase III domain-like"/>
    <property type="match status" value="2"/>
</dbReference>
<dbReference type="PROSITE" id="PS51327">
    <property type="entry name" value="DICER_DSRBF"/>
    <property type="match status" value="1"/>
</dbReference>
<dbReference type="PROSITE" id="PS50137">
    <property type="entry name" value="DS_RBD"/>
    <property type="match status" value="1"/>
</dbReference>
<dbReference type="PROSITE" id="PS51192">
    <property type="entry name" value="HELICASE_ATP_BIND_1"/>
    <property type="match status" value="1"/>
</dbReference>
<dbReference type="PROSITE" id="PS51194">
    <property type="entry name" value="HELICASE_CTER"/>
    <property type="match status" value="1"/>
</dbReference>
<dbReference type="PROSITE" id="PS50821">
    <property type="entry name" value="PAZ"/>
    <property type="match status" value="1"/>
</dbReference>
<dbReference type="PROSITE" id="PS00517">
    <property type="entry name" value="RNASE_3_1"/>
    <property type="match status" value="1"/>
</dbReference>
<dbReference type="PROSITE" id="PS50142">
    <property type="entry name" value="RNASE_3_2"/>
    <property type="match status" value="2"/>
</dbReference>